<dbReference type="EC" id="3.1.26.4" evidence="1"/>
<dbReference type="EMBL" id="CP000269">
    <property type="protein sequence ID" value="ABR89141.1"/>
    <property type="molecule type" value="Genomic_DNA"/>
</dbReference>
<dbReference type="RefSeq" id="WP_012079068.1">
    <property type="nucleotide sequence ID" value="NC_009659.1"/>
</dbReference>
<dbReference type="SMR" id="A6SXA4"/>
<dbReference type="STRING" id="375286.mma_1211"/>
<dbReference type="KEGG" id="mms:mma_1211"/>
<dbReference type="eggNOG" id="COG0328">
    <property type="taxonomic scope" value="Bacteria"/>
</dbReference>
<dbReference type="HOGENOM" id="CLU_030894_6_0_4"/>
<dbReference type="OrthoDB" id="7845843at2"/>
<dbReference type="Proteomes" id="UP000006388">
    <property type="component" value="Chromosome"/>
</dbReference>
<dbReference type="GO" id="GO:0005737">
    <property type="term" value="C:cytoplasm"/>
    <property type="evidence" value="ECO:0007669"/>
    <property type="project" value="UniProtKB-SubCell"/>
</dbReference>
<dbReference type="GO" id="GO:0000287">
    <property type="term" value="F:magnesium ion binding"/>
    <property type="evidence" value="ECO:0007669"/>
    <property type="project" value="UniProtKB-UniRule"/>
</dbReference>
<dbReference type="GO" id="GO:0003676">
    <property type="term" value="F:nucleic acid binding"/>
    <property type="evidence" value="ECO:0007669"/>
    <property type="project" value="InterPro"/>
</dbReference>
<dbReference type="GO" id="GO:0004523">
    <property type="term" value="F:RNA-DNA hybrid ribonuclease activity"/>
    <property type="evidence" value="ECO:0007669"/>
    <property type="project" value="UniProtKB-UniRule"/>
</dbReference>
<dbReference type="GO" id="GO:0043137">
    <property type="term" value="P:DNA replication, removal of RNA primer"/>
    <property type="evidence" value="ECO:0007669"/>
    <property type="project" value="TreeGrafter"/>
</dbReference>
<dbReference type="CDD" id="cd09278">
    <property type="entry name" value="RNase_HI_prokaryote_like"/>
    <property type="match status" value="1"/>
</dbReference>
<dbReference type="FunFam" id="3.30.420.10:FF:000089">
    <property type="entry name" value="Ribonuclease H"/>
    <property type="match status" value="1"/>
</dbReference>
<dbReference type="Gene3D" id="3.30.420.10">
    <property type="entry name" value="Ribonuclease H-like superfamily/Ribonuclease H"/>
    <property type="match status" value="1"/>
</dbReference>
<dbReference type="HAMAP" id="MF_00042">
    <property type="entry name" value="RNase_H"/>
    <property type="match status" value="1"/>
</dbReference>
<dbReference type="InterPro" id="IPR050092">
    <property type="entry name" value="RNase_H"/>
</dbReference>
<dbReference type="InterPro" id="IPR012337">
    <property type="entry name" value="RNaseH-like_sf"/>
</dbReference>
<dbReference type="InterPro" id="IPR002156">
    <property type="entry name" value="RNaseH_domain"/>
</dbReference>
<dbReference type="InterPro" id="IPR036397">
    <property type="entry name" value="RNaseH_sf"/>
</dbReference>
<dbReference type="InterPro" id="IPR022892">
    <property type="entry name" value="RNaseHI"/>
</dbReference>
<dbReference type="NCBIfam" id="NF001236">
    <property type="entry name" value="PRK00203.1"/>
    <property type="match status" value="1"/>
</dbReference>
<dbReference type="PANTHER" id="PTHR10642">
    <property type="entry name" value="RIBONUCLEASE H1"/>
    <property type="match status" value="1"/>
</dbReference>
<dbReference type="PANTHER" id="PTHR10642:SF26">
    <property type="entry name" value="RIBONUCLEASE H1"/>
    <property type="match status" value="1"/>
</dbReference>
<dbReference type="Pfam" id="PF00075">
    <property type="entry name" value="RNase_H"/>
    <property type="match status" value="1"/>
</dbReference>
<dbReference type="SUPFAM" id="SSF53098">
    <property type="entry name" value="Ribonuclease H-like"/>
    <property type="match status" value="1"/>
</dbReference>
<dbReference type="PROSITE" id="PS50879">
    <property type="entry name" value="RNASE_H_1"/>
    <property type="match status" value="1"/>
</dbReference>
<accession>A6SXA4</accession>
<keyword id="KW-0963">Cytoplasm</keyword>
<keyword id="KW-0255">Endonuclease</keyword>
<keyword id="KW-0378">Hydrolase</keyword>
<keyword id="KW-0460">Magnesium</keyword>
<keyword id="KW-0479">Metal-binding</keyword>
<keyword id="KW-0540">Nuclease</keyword>
<protein>
    <recommendedName>
        <fullName evidence="1">Ribonuclease H</fullName>
        <shortName evidence="1">RNase H</shortName>
        <ecNumber evidence="1">3.1.26.4</ecNumber>
    </recommendedName>
</protein>
<name>RNH_JANMA</name>
<gene>
    <name evidence="1" type="primary">rnhA</name>
    <name type="ordered locus">mma_1211</name>
</gene>
<sequence>MDKIDIYSDGACKGNPGRGGWGALLVMGEREKEIFGGELDTTNNRMELKAVIEALNLLTRPCEVVVHTDSQYVQKGISEWIHGWKARGWKTAAKAPVKNVDLWQALDAAQARHKIEWRWVRGHNGHAGNERADALANRGVEVAA</sequence>
<proteinExistence type="inferred from homology"/>
<comment type="function">
    <text evidence="1">Endonuclease that specifically degrades the RNA of RNA-DNA hybrids.</text>
</comment>
<comment type="catalytic activity">
    <reaction evidence="1">
        <text>Endonucleolytic cleavage to 5'-phosphomonoester.</text>
        <dbReference type="EC" id="3.1.26.4"/>
    </reaction>
</comment>
<comment type="cofactor">
    <cofactor evidence="1">
        <name>Mg(2+)</name>
        <dbReference type="ChEBI" id="CHEBI:18420"/>
    </cofactor>
    <text evidence="1">Binds 1 Mg(2+) ion per subunit. May bind a second metal ion at a regulatory site, or after substrate binding.</text>
</comment>
<comment type="subunit">
    <text evidence="1">Monomer.</text>
</comment>
<comment type="subcellular location">
    <subcellularLocation>
        <location evidence="1">Cytoplasm</location>
    </subcellularLocation>
</comment>
<comment type="similarity">
    <text evidence="1">Belongs to the RNase H family.</text>
</comment>
<reference key="1">
    <citation type="journal article" date="2007" name="PLoS Genet.">
        <title>Genome analysis of Minibacterium massiliensis highlights the convergent evolution of water-living bacteria.</title>
        <authorList>
            <person name="Audic S."/>
            <person name="Robert C."/>
            <person name="Campagna B."/>
            <person name="Parinello H."/>
            <person name="Claverie J.-M."/>
            <person name="Raoult D."/>
            <person name="Drancourt M."/>
        </authorList>
    </citation>
    <scope>NUCLEOTIDE SEQUENCE [LARGE SCALE GENOMIC DNA]</scope>
    <source>
        <strain>Marseille</strain>
    </source>
</reference>
<organism>
    <name type="scientific">Janthinobacterium sp. (strain Marseille)</name>
    <name type="common">Minibacterium massiliensis</name>
    <dbReference type="NCBI Taxonomy" id="375286"/>
    <lineage>
        <taxon>Bacteria</taxon>
        <taxon>Pseudomonadati</taxon>
        <taxon>Pseudomonadota</taxon>
        <taxon>Betaproteobacteria</taxon>
        <taxon>Burkholderiales</taxon>
        <taxon>Oxalobacteraceae</taxon>
        <taxon>Janthinobacterium</taxon>
    </lineage>
</organism>
<feature type="chain" id="PRO_0000332617" description="Ribonuclease H">
    <location>
        <begin position="1"/>
        <end position="144"/>
    </location>
</feature>
<feature type="domain" description="RNase H type-1" evidence="2">
    <location>
        <begin position="1"/>
        <end position="141"/>
    </location>
</feature>
<feature type="binding site" evidence="1">
    <location>
        <position position="9"/>
    </location>
    <ligand>
        <name>Mg(2+)</name>
        <dbReference type="ChEBI" id="CHEBI:18420"/>
        <label>1</label>
    </ligand>
</feature>
<feature type="binding site" evidence="1">
    <location>
        <position position="9"/>
    </location>
    <ligand>
        <name>Mg(2+)</name>
        <dbReference type="ChEBI" id="CHEBI:18420"/>
        <label>2</label>
    </ligand>
</feature>
<feature type="binding site" evidence="1">
    <location>
        <position position="47"/>
    </location>
    <ligand>
        <name>Mg(2+)</name>
        <dbReference type="ChEBI" id="CHEBI:18420"/>
        <label>1</label>
    </ligand>
</feature>
<feature type="binding site" evidence="1">
    <location>
        <position position="69"/>
    </location>
    <ligand>
        <name>Mg(2+)</name>
        <dbReference type="ChEBI" id="CHEBI:18420"/>
        <label>1</label>
    </ligand>
</feature>
<feature type="binding site" evidence="1">
    <location>
        <position position="133"/>
    </location>
    <ligand>
        <name>Mg(2+)</name>
        <dbReference type="ChEBI" id="CHEBI:18420"/>
        <label>2</label>
    </ligand>
</feature>
<evidence type="ECO:0000255" key="1">
    <source>
        <dbReference type="HAMAP-Rule" id="MF_00042"/>
    </source>
</evidence>
<evidence type="ECO:0000255" key="2">
    <source>
        <dbReference type="PROSITE-ProRule" id="PRU00408"/>
    </source>
</evidence>